<evidence type="ECO:0000250" key="1"/>
<evidence type="ECO:0000255" key="2"/>
<evidence type="ECO:0000256" key="3">
    <source>
        <dbReference type="SAM" id="MobiDB-lite"/>
    </source>
</evidence>
<evidence type="ECO:0000305" key="4"/>
<accession>Q653V6</accession>
<comment type="function">
    <text evidence="1">Probable metal transporter.</text>
</comment>
<comment type="subcellular location">
    <subcellularLocation>
        <location evidence="4">Membrane</location>
        <topology evidence="4">Multi-pass membrane protein</topology>
    </subcellularLocation>
</comment>
<comment type="similarity">
    <text evidence="4">Belongs to the NRAMP (TC 2.A.55) family.</text>
</comment>
<name>NRAM3_ORYSJ</name>
<protein>
    <recommendedName>
        <fullName>Metal transporter Nramp3</fullName>
        <shortName>OsNramp3</shortName>
    </recommendedName>
</protein>
<feature type="chain" id="PRO_0000405568" description="Metal transporter Nramp3">
    <location>
        <begin position="1"/>
        <end position="550"/>
    </location>
</feature>
<feature type="transmembrane region" description="Helical" evidence="2">
    <location>
        <begin position="50"/>
        <end position="70"/>
    </location>
</feature>
<feature type="transmembrane region" description="Helical" evidence="2">
    <location>
        <begin position="83"/>
        <end position="103"/>
    </location>
</feature>
<feature type="transmembrane region" description="Helical" evidence="2">
    <location>
        <begin position="127"/>
        <end position="147"/>
    </location>
</feature>
<feature type="transmembrane region" description="Helical" evidence="2">
    <location>
        <begin position="158"/>
        <end position="178"/>
    </location>
</feature>
<feature type="transmembrane region" description="Helical" evidence="2">
    <location>
        <begin position="185"/>
        <end position="205"/>
    </location>
</feature>
<feature type="transmembrane region" description="Helical" evidence="2">
    <location>
        <begin position="233"/>
        <end position="253"/>
    </location>
</feature>
<feature type="transmembrane region" description="Helical" evidence="2">
    <location>
        <begin position="276"/>
        <end position="296"/>
    </location>
</feature>
<feature type="transmembrane region" description="Helical" evidence="2">
    <location>
        <begin position="333"/>
        <end position="353"/>
    </location>
</feature>
<feature type="transmembrane region" description="Helical" evidence="2">
    <location>
        <begin position="368"/>
        <end position="390"/>
    </location>
</feature>
<feature type="transmembrane region" description="Helical" evidence="2">
    <location>
        <begin position="397"/>
        <end position="417"/>
    </location>
</feature>
<feature type="transmembrane region" description="Helical" evidence="2">
    <location>
        <begin position="435"/>
        <end position="455"/>
    </location>
</feature>
<feature type="transmembrane region" description="Helical" evidence="2">
    <location>
        <begin position="473"/>
        <end position="493"/>
    </location>
</feature>
<feature type="region of interest" description="Disordered" evidence="3">
    <location>
        <begin position="1"/>
        <end position="30"/>
    </location>
</feature>
<feature type="region of interest" description="Disordered" evidence="3">
    <location>
        <begin position="523"/>
        <end position="550"/>
    </location>
</feature>
<feature type="compositionally biased region" description="Polar residues" evidence="3">
    <location>
        <begin position="1"/>
        <end position="26"/>
    </location>
</feature>
<feature type="compositionally biased region" description="Polar residues" evidence="3">
    <location>
        <begin position="536"/>
        <end position="550"/>
    </location>
</feature>
<proteinExistence type="evidence at transcript level"/>
<dbReference type="EMBL" id="AP004989">
    <property type="protein sequence ID" value="BAD45911.1"/>
    <property type="molecule type" value="Genomic_DNA"/>
</dbReference>
<dbReference type="EMBL" id="AP014962">
    <property type="protein sequence ID" value="BAS99105.1"/>
    <property type="molecule type" value="Genomic_DNA"/>
</dbReference>
<dbReference type="EMBL" id="CM000143">
    <property type="protein sequence ID" value="EAZ38005.1"/>
    <property type="molecule type" value="Genomic_DNA"/>
</dbReference>
<dbReference type="EMBL" id="AK070574">
    <property type="protein sequence ID" value="BAG92038.1"/>
    <property type="molecule type" value="mRNA"/>
</dbReference>
<dbReference type="RefSeq" id="XP_015644306.1">
    <property type="nucleotide sequence ID" value="XM_015788820.1"/>
</dbReference>
<dbReference type="RefSeq" id="XP_015644307.1">
    <property type="nucleotide sequence ID" value="XM_015788821.1"/>
</dbReference>
<dbReference type="SMR" id="Q653V6"/>
<dbReference type="FunCoup" id="Q653V6">
    <property type="interactions" value="50"/>
</dbReference>
<dbReference type="STRING" id="39947.Q653V6"/>
<dbReference type="PaxDb" id="39947-Q653V6"/>
<dbReference type="EnsemblPlants" id="Os06t0676000-01">
    <property type="protein sequence ID" value="Os06t0676000-01"/>
    <property type="gene ID" value="Os06g0676000"/>
</dbReference>
<dbReference type="Gramene" id="Os06t0676000-01">
    <property type="protein sequence ID" value="Os06t0676000-01"/>
    <property type="gene ID" value="Os06g0676000"/>
</dbReference>
<dbReference type="eggNOG" id="KOG1291">
    <property type="taxonomic scope" value="Eukaryota"/>
</dbReference>
<dbReference type="HOGENOM" id="CLU_020088_0_1_1"/>
<dbReference type="InParanoid" id="Q653V6"/>
<dbReference type="OMA" id="AQNCKKH"/>
<dbReference type="OrthoDB" id="409173at2759"/>
<dbReference type="Proteomes" id="UP000000763">
    <property type="component" value="Chromosome 6"/>
</dbReference>
<dbReference type="Proteomes" id="UP000007752">
    <property type="component" value="Chromosome 6"/>
</dbReference>
<dbReference type="Proteomes" id="UP000059680">
    <property type="component" value="Chromosome 6"/>
</dbReference>
<dbReference type="ExpressionAtlas" id="Q653V6">
    <property type="expression patterns" value="baseline and differential"/>
</dbReference>
<dbReference type="GO" id="GO:0005886">
    <property type="term" value="C:plasma membrane"/>
    <property type="evidence" value="ECO:0000318"/>
    <property type="project" value="GO_Central"/>
</dbReference>
<dbReference type="GO" id="GO:0015086">
    <property type="term" value="F:cadmium ion transmembrane transporter activity"/>
    <property type="evidence" value="ECO:0000318"/>
    <property type="project" value="GO_Central"/>
</dbReference>
<dbReference type="GO" id="GO:0005384">
    <property type="term" value="F:manganese ion transmembrane transporter activity"/>
    <property type="evidence" value="ECO:0000318"/>
    <property type="project" value="GO_Central"/>
</dbReference>
<dbReference type="GO" id="GO:0034755">
    <property type="term" value="P:iron ion transmembrane transport"/>
    <property type="evidence" value="ECO:0000318"/>
    <property type="project" value="GO_Central"/>
</dbReference>
<dbReference type="GO" id="GO:0006828">
    <property type="term" value="P:manganese ion transport"/>
    <property type="evidence" value="ECO:0000318"/>
    <property type="project" value="GO_Central"/>
</dbReference>
<dbReference type="HAMAP" id="MF_00221">
    <property type="entry name" value="NRAMP"/>
    <property type="match status" value="1"/>
</dbReference>
<dbReference type="InterPro" id="IPR001046">
    <property type="entry name" value="NRAMP_fam"/>
</dbReference>
<dbReference type="NCBIfam" id="TIGR01197">
    <property type="entry name" value="nramp"/>
    <property type="match status" value="1"/>
</dbReference>
<dbReference type="NCBIfam" id="NF037982">
    <property type="entry name" value="Nramp_1"/>
    <property type="match status" value="1"/>
</dbReference>
<dbReference type="NCBIfam" id="NF001923">
    <property type="entry name" value="PRK00701.1"/>
    <property type="match status" value="1"/>
</dbReference>
<dbReference type="PANTHER" id="PTHR11706:SF54">
    <property type="entry name" value="METAL TRANSPORTER NRAMP1"/>
    <property type="match status" value="1"/>
</dbReference>
<dbReference type="PANTHER" id="PTHR11706">
    <property type="entry name" value="SOLUTE CARRIER PROTEIN FAMILY 11 MEMBER"/>
    <property type="match status" value="1"/>
</dbReference>
<dbReference type="Pfam" id="PF01566">
    <property type="entry name" value="Nramp"/>
    <property type="match status" value="1"/>
</dbReference>
<dbReference type="PRINTS" id="PR00447">
    <property type="entry name" value="NATRESASSCMP"/>
</dbReference>
<reference key="1">
    <citation type="journal article" date="2005" name="Nature">
        <title>The map-based sequence of the rice genome.</title>
        <authorList>
            <consortium name="International rice genome sequencing project (IRGSP)"/>
        </authorList>
    </citation>
    <scope>NUCLEOTIDE SEQUENCE [LARGE SCALE GENOMIC DNA]</scope>
    <source>
        <strain>cv. Nipponbare</strain>
    </source>
</reference>
<reference key="2">
    <citation type="journal article" date="2013" name="Rice">
        <title>Improvement of the Oryza sativa Nipponbare reference genome using next generation sequence and optical map data.</title>
        <authorList>
            <person name="Kawahara Y."/>
            <person name="de la Bastide M."/>
            <person name="Hamilton J.P."/>
            <person name="Kanamori H."/>
            <person name="McCombie W.R."/>
            <person name="Ouyang S."/>
            <person name="Schwartz D.C."/>
            <person name="Tanaka T."/>
            <person name="Wu J."/>
            <person name="Zhou S."/>
            <person name="Childs K.L."/>
            <person name="Davidson R.M."/>
            <person name="Lin H."/>
            <person name="Quesada-Ocampo L."/>
            <person name="Vaillancourt B."/>
            <person name="Sakai H."/>
            <person name="Lee S.S."/>
            <person name="Kim J."/>
            <person name="Numa H."/>
            <person name="Itoh T."/>
            <person name="Buell C.R."/>
            <person name="Matsumoto T."/>
        </authorList>
    </citation>
    <scope>GENOME REANNOTATION</scope>
    <source>
        <strain>cv. Nipponbare</strain>
    </source>
</reference>
<reference key="3">
    <citation type="journal article" date="2005" name="PLoS Biol.">
        <title>The genomes of Oryza sativa: a history of duplications.</title>
        <authorList>
            <person name="Yu J."/>
            <person name="Wang J."/>
            <person name="Lin W."/>
            <person name="Li S."/>
            <person name="Li H."/>
            <person name="Zhou J."/>
            <person name="Ni P."/>
            <person name="Dong W."/>
            <person name="Hu S."/>
            <person name="Zeng C."/>
            <person name="Zhang J."/>
            <person name="Zhang Y."/>
            <person name="Li R."/>
            <person name="Xu Z."/>
            <person name="Li S."/>
            <person name="Li X."/>
            <person name="Zheng H."/>
            <person name="Cong L."/>
            <person name="Lin L."/>
            <person name="Yin J."/>
            <person name="Geng J."/>
            <person name="Li G."/>
            <person name="Shi J."/>
            <person name="Liu J."/>
            <person name="Lv H."/>
            <person name="Li J."/>
            <person name="Wang J."/>
            <person name="Deng Y."/>
            <person name="Ran L."/>
            <person name="Shi X."/>
            <person name="Wang X."/>
            <person name="Wu Q."/>
            <person name="Li C."/>
            <person name="Ren X."/>
            <person name="Wang J."/>
            <person name="Wang X."/>
            <person name="Li D."/>
            <person name="Liu D."/>
            <person name="Zhang X."/>
            <person name="Ji Z."/>
            <person name="Zhao W."/>
            <person name="Sun Y."/>
            <person name="Zhang Z."/>
            <person name="Bao J."/>
            <person name="Han Y."/>
            <person name="Dong L."/>
            <person name="Ji J."/>
            <person name="Chen P."/>
            <person name="Wu S."/>
            <person name="Liu J."/>
            <person name="Xiao Y."/>
            <person name="Bu D."/>
            <person name="Tan J."/>
            <person name="Yang L."/>
            <person name="Ye C."/>
            <person name="Zhang J."/>
            <person name="Xu J."/>
            <person name="Zhou Y."/>
            <person name="Yu Y."/>
            <person name="Zhang B."/>
            <person name="Zhuang S."/>
            <person name="Wei H."/>
            <person name="Liu B."/>
            <person name="Lei M."/>
            <person name="Yu H."/>
            <person name="Li Y."/>
            <person name="Xu H."/>
            <person name="Wei S."/>
            <person name="He X."/>
            <person name="Fang L."/>
            <person name="Zhang Z."/>
            <person name="Zhang Y."/>
            <person name="Huang X."/>
            <person name="Su Z."/>
            <person name="Tong W."/>
            <person name="Li J."/>
            <person name="Tong Z."/>
            <person name="Li S."/>
            <person name="Ye J."/>
            <person name="Wang L."/>
            <person name="Fang L."/>
            <person name="Lei T."/>
            <person name="Chen C.-S."/>
            <person name="Chen H.-C."/>
            <person name="Xu Z."/>
            <person name="Li H."/>
            <person name="Huang H."/>
            <person name="Zhang F."/>
            <person name="Xu H."/>
            <person name="Li N."/>
            <person name="Zhao C."/>
            <person name="Li S."/>
            <person name="Dong L."/>
            <person name="Huang Y."/>
            <person name="Li L."/>
            <person name="Xi Y."/>
            <person name="Qi Q."/>
            <person name="Li W."/>
            <person name="Zhang B."/>
            <person name="Hu W."/>
            <person name="Zhang Y."/>
            <person name="Tian X."/>
            <person name="Jiao Y."/>
            <person name="Liang X."/>
            <person name="Jin J."/>
            <person name="Gao L."/>
            <person name="Zheng W."/>
            <person name="Hao B."/>
            <person name="Liu S.-M."/>
            <person name="Wang W."/>
            <person name="Yuan L."/>
            <person name="Cao M."/>
            <person name="McDermott J."/>
            <person name="Samudrala R."/>
            <person name="Wang J."/>
            <person name="Wong G.K.-S."/>
            <person name="Yang H."/>
        </authorList>
    </citation>
    <scope>NUCLEOTIDE SEQUENCE [LARGE SCALE GENOMIC DNA]</scope>
    <source>
        <strain>cv. Nipponbare</strain>
    </source>
</reference>
<reference key="4">
    <citation type="journal article" date="2003" name="Science">
        <title>Collection, mapping, and annotation of over 28,000 cDNA clones from japonica rice.</title>
        <authorList>
            <consortium name="The rice full-length cDNA consortium"/>
        </authorList>
    </citation>
    <scope>NUCLEOTIDE SEQUENCE [LARGE SCALE MRNA]</scope>
    <source>
        <strain>cv. Nipponbare</strain>
    </source>
</reference>
<keyword id="KW-0406">Ion transport</keyword>
<keyword id="KW-0408">Iron</keyword>
<keyword id="KW-0410">Iron transport</keyword>
<keyword id="KW-0472">Membrane</keyword>
<keyword id="KW-1185">Reference proteome</keyword>
<keyword id="KW-0812">Transmembrane</keyword>
<keyword id="KW-1133">Transmembrane helix</keyword>
<keyword id="KW-0813">Transport</keyword>
<organism>
    <name type="scientific">Oryza sativa subsp. japonica</name>
    <name type="common">Rice</name>
    <dbReference type="NCBI Taxonomy" id="39947"/>
    <lineage>
        <taxon>Eukaryota</taxon>
        <taxon>Viridiplantae</taxon>
        <taxon>Streptophyta</taxon>
        <taxon>Embryophyta</taxon>
        <taxon>Tracheophyta</taxon>
        <taxon>Spermatophyta</taxon>
        <taxon>Magnoliopsida</taxon>
        <taxon>Liliopsida</taxon>
        <taxon>Poales</taxon>
        <taxon>Poaceae</taxon>
        <taxon>BOP clade</taxon>
        <taxon>Oryzoideae</taxon>
        <taxon>Oryzeae</taxon>
        <taxon>Oryzinae</taxon>
        <taxon>Oryza</taxon>
        <taxon>Oryza sativa</taxon>
    </lineage>
</organism>
<gene>
    <name type="primary">NRAMP3</name>
    <name type="ordered locus">Os06g0676000</name>
    <name type="ordered locus">LOC_Os06g46310</name>
    <name type="ORF">B1153E06.4</name>
    <name type="ORF">OsJ_22349</name>
</gene>
<sequence length="550" mass="59708">MSGPMQRSSQPQFISSVERNNQSNGPGTPLIDSIDVDQIVIPEKNSWKNLFSYIGPGFLVSIAYIDPGNFETDLQAGAQYKYELLWIILIASCAALIIQSLAARLGVVTGKHLAEHCRAEYPKATNFILWILAELAVVACDIPEVIGTAFALNMLFKIPVWCGVLITGLSTLMLLLLQQYGVRKLEFLIAILVSLIATCFLVELGYSKPNSSEVVRGLFVPELKGNGATGLAISLLGAMVMPHNLFLHSALVLSRKVPRSVHGIKEACRFYMIESAFALTIAFLINISIISVSGAVCGSDNLSPEDQMNCSDLDLNKASFLLKNVLGNWSSKLFAVALLASGQSSTITGTYAGQYVMQGFLDLRMTPWIRNLLTRSLAILPSLIVSIIGGSSAAGQLIIIASMILSFELPFALVPLLKFTSSRTKMGQHTNSKAISVITWGIGSFIVVINTYFLITSFVKLLLHNGLSTVSQVFSGIFGFLGMLIYMAAILYLVFRKNRKATLPLLEGDSTVRIVGRDTATEGEGSLGHLPREDISSMQLPQQRTASDLD</sequence>